<sequence>MGNAAAAKKGSEQESVKEFLAKAKEDFLKKWENPAQNTAHLDQFERIKTLGTGSFGRVMLVKHMETGNHYAMKILDKQKVVKLKQIEHTLNEKRILQAVNFPFLVKLEFSFKDNSNLYMVMEYVPGGEMFSHLRRIGRFSEPHARFYAAQIVLTFEYLHSLDLIYRDLKPENLLIDQQGYIQVTDFGFAKRVKGRTWTLCGTPEYLAPEIILSKGYNKAVDWWALGVLIYEMAAGYPPFFADQPIQIYEKIVSGKVRFPSHFSSDLKDLLRNLLQVDLTKRFGNLKNGVNDIKNHKWFATTDWIAIYQRKVEAPFIPKFKGPGDTSNFDDYEEEEIRVSINEKCGKEFSEF</sequence>
<protein>
    <recommendedName>
        <fullName>cAMP-dependent protein kinase catalytic subunit alpha</fullName>
        <shortName>PKA C-alpha</shortName>
        <ecNumber>2.7.11.11</ecNumber>
    </recommendedName>
</protein>
<reference key="1">
    <citation type="journal article" date="1992" name="Biochim. Biophys. Acta">
        <title>Cloning of the C alpha catalytic subunit of the bovine cAMP-dependent protein kinase.</title>
        <authorList>
            <person name="Wiemann S."/>
            <person name="Kinzel V."/>
            <person name="Pyerin W."/>
        </authorList>
    </citation>
    <scope>NUCLEOTIDE SEQUENCE [MRNA]</scope>
    <source>
        <tissue>Heart</tissue>
    </source>
</reference>
<reference key="2">
    <citation type="journal article" date="1981" name="Proc. Natl. Acad. Sci. U.S.A.">
        <title>Complete amino acid sequence of the catalytic subunit of bovine cardiac muscle cyclic AMP-dependent protein kinase.</title>
        <authorList>
            <person name="Shoji S."/>
            <person name="Parmelee D.C."/>
            <person name="Wade R.D."/>
            <person name="Kumar S."/>
            <person name="Ericsson L.H."/>
            <person name="Walsh K.A."/>
            <person name="Neurath H."/>
            <person name="Lonh G.L."/>
            <person name="Demaille J.G."/>
            <person name="Fischer E.H."/>
            <person name="Titani K."/>
        </authorList>
    </citation>
    <scope>PROTEIN SEQUENCE OF 2-351</scope>
    <scope>MYRISTOYLATION AT GLY-2</scope>
    <scope>PHOSPHORYLATION AT THR-198 AND SER-339</scope>
</reference>
<reference key="3">
    <citation type="journal article" date="1983" name="Biochemistry">
        <title>Amino acid sequence of the catalytic subunit of bovine type II adenosine cyclic 3',5'-phosphate dependent protein kinase.</title>
        <authorList>
            <person name="Shoji S."/>
            <person name="Ericsson L.H."/>
            <person name="Walsh K.A."/>
            <person name="Fischer E.H."/>
            <person name="Titani K."/>
        </authorList>
    </citation>
    <scope>PROTEIN SEQUENCE OF 2-351</scope>
</reference>
<reference key="4">
    <citation type="journal article" date="1982" name="J. Biol. Chem.">
        <title>Modification of the catalytic subunit of bovine heart cAMP-dependent protein kinase with affinity labels related to peptide substrates.</title>
        <authorList>
            <person name="Bramson H.N."/>
            <person name="Thomas N."/>
            <person name="Matsueda R."/>
            <person name="Nelson N.C."/>
            <person name="Taylor S.S."/>
            <person name="Kaiser E.T."/>
        </authorList>
    </citation>
    <scope>PROTEIN SEQUENCE OF 196-214</scope>
    <scope>ACTIVE SITE</scope>
</reference>
<reference key="5">
    <citation type="journal article" date="1998" name="Protein Sci.">
        <title>A conserved deamidation site at Asn 2 in the catalytic subunit of mammalian cAMP-dependent protein kinase detected by capillary LC-MS and tandem mass spectrometry.</title>
        <authorList>
            <person name="Jedrzejewski P.T."/>
            <person name="Girod A."/>
            <person name="Tholey A."/>
            <person name="Koenig N."/>
            <person name="Thullner S."/>
            <person name="Kinzel V."/>
            <person name="Bossemeyer D."/>
        </authorList>
    </citation>
    <scope>PROTEIN SEQUENCE OF 2-8</scope>
    <scope>MUTAGENESIS OF ASN-3</scope>
    <scope>DEAMIDATION AT ASN-3</scope>
</reference>
<reference key="6">
    <citation type="journal article" date="2000" name="J. Cell Biol.">
        <title>Intracellular distribution of mammalian protein kinase A catalytic subunit altered by conserved Asn2 deamidation.</title>
        <authorList>
            <person name="Pepperkok R."/>
            <person name="Hotz-Wagenblatt A."/>
            <person name="Koenig N."/>
            <person name="Girod A."/>
            <person name="Bossemeyer D."/>
            <person name="Kinzel V."/>
        </authorList>
    </citation>
    <scope>DEAMIDATION AT ASN-3</scope>
    <scope>SUBCELLULAR LOCATION</scope>
</reference>
<reference key="7">
    <citation type="journal article" date="2000" name="Protein Sci.">
        <title>The amino terminus of PKA catalytic subunit- a site for introduction of posttranslational heterogeneities by deamidation: D-Asp2 and D-isoAsp2 containing isozymes.</title>
        <authorList>
            <person name="Kinzel V."/>
            <person name="Koenig N."/>
            <person name="Pipkorn R."/>
            <person name="Bossemeyer D."/>
            <person name="Lehmann W.D."/>
        </authorList>
    </citation>
    <scope>DEAMIDATION AT ASN-3</scope>
    <scope>CHARACTERIZATION OF ASP-3 ISOMERS</scope>
</reference>
<reference key="8">
    <citation type="journal article" date="2004" name="J. Cell Biol.">
        <title>Rab13 regulates PKA signaling during tight junction assembly.</title>
        <authorList>
            <person name="Koehler K."/>
            <person name="Louvard D."/>
            <person name="Zahraoui A."/>
        </authorList>
    </citation>
    <scope>INTERACTION WITH RAB13</scope>
</reference>
<reference key="9">
    <citation type="journal article" date="1996" name="J. Biol. Chem.">
        <title>Crystal structures of catalytic subunit of cAMP-dependent protein kinase in complex with isoquinolinesulfonyl protein kinase inhibitors H7, H8, and H89. Structural implications for selectivity.</title>
        <authorList>
            <person name="Engh R.A."/>
            <person name="Girod A."/>
            <person name="Kinzel V."/>
            <person name="Huber R."/>
            <person name="Bossemeyer D."/>
        </authorList>
    </citation>
    <scope>X-RAY CRYSTALLOGRAPHY (2.2 ANGSTROMS)</scope>
</reference>
<reference key="10">
    <citation type="journal article" date="1997" name="Structure">
        <title>Staurosporine-induced conformational changes of cAMP-dependent protein kinase catalytic subunit explain inhibitory potential.</title>
        <authorList>
            <person name="Prade L."/>
            <person name="Engh R.A."/>
            <person name="Girod A."/>
            <person name="Kinzel V."/>
            <person name="Huber R."/>
            <person name="Bossemeyer D."/>
        </authorList>
    </citation>
    <scope>X-RAY CRYSTALLOGRAPHY (2.3 ANGSTROMS)</scope>
</reference>
<evidence type="ECO:0000250" key="1">
    <source>
        <dbReference type="UniProtKB" id="P05132"/>
    </source>
</evidence>
<evidence type="ECO:0000250" key="2">
    <source>
        <dbReference type="UniProtKB" id="P17612"/>
    </source>
</evidence>
<evidence type="ECO:0000250" key="3">
    <source>
        <dbReference type="UniProtKB" id="P27791"/>
    </source>
</evidence>
<evidence type="ECO:0000255" key="4">
    <source>
        <dbReference type="PROSITE-ProRule" id="PRU00159"/>
    </source>
</evidence>
<evidence type="ECO:0000255" key="5">
    <source>
        <dbReference type="PROSITE-ProRule" id="PRU00618"/>
    </source>
</evidence>
<evidence type="ECO:0000255" key="6">
    <source>
        <dbReference type="PROSITE-ProRule" id="PRU10027"/>
    </source>
</evidence>
<evidence type="ECO:0000269" key="7">
    <source>
    </source>
</evidence>
<evidence type="ECO:0000269" key="8">
    <source>
    </source>
</evidence>
<evidence type="ECO:0000269" key="9">
    <source>
    </source>
</evidence>
<evidence type="ECO:0000269" key="10">
    <source>
    </source>
</evidence>
<evidence type="ECO:0000269" key="11">
    <source>
    </source>
</evidence>
<evidence type="ECO:0000269" key="12">
    <source>
    </source>
</evidence>
<evidence type="ECO:0000269" key="13">
    <source>
    </source>
</evidence>
<evidence type="ECO:0000305" key="14"/>
<evidence type="ECO:0007829" key="15">
    <source>
        <dbReference type="PDB" id="1STC"/>
    </source>
</evidence>
<evidence type="ECO:0007829" key="16">
    <source>
        <dbReference type="PDB" id="2UZV"/>
    </source>
</evidence>
<evidence type="ECO:0007829" key="17">
    <source>
        <dbReference type="PDB" id="2VO0"/>
    </source>
</evidence>
<evidence type="ECO:0007829" key="18">
    <source>
        <dbReference type="PDB" id="2VO3"/>
    </source>
</evidence>
<evidence type="ECO:0007829" key="19">
    <source>
        <dbReference type="PDB" id="3DND"/>
    </source>
</evidence>
<evidence type="ECO:0007829" key="20">
    <source>
        <dbReference type="PDB" id="4C33"/>
    </source>
</evidence>
<evidence type="ECO:0007829" key="21">
    <source>
        <dbReference type="PDB" id="4C34"/>
    </source>
</evidence>
<evidence type="ECO:0007829" key="22">
    <source>
        <dbReference type="PDB" id="4Z84"/>
    </source>
</evidence>
<evidence type="ECO:0007829" key="23">
    <source>
        <dbReference type="PDB" id="9DW8"/>
    </source>
</evidence>
<dbReference type="EC" id="2.7.11.11"/>
<dbReference type="EMBL" id="X67154">
    <property type="protein sequence ID" value="CAA47627.1"/>
    <property type="molecule type" value="mRNA"/>
</dbReference>
<dbReference type="PIR" id="S27159">
    <property type="entry name" value="OKBO2C"/>
</dbReference>
<dbReference type="RefSeq" id="NP_777009.1">
    <property type="nucleotide sequence ID" value="NM_174584.3"/>
</dbReference>
<dbReference type="PDB" id="1Q24">
    <property type="method" value="X-ray"/>
    <property type="resolution" value="2.60 A"/>
    <property type="chains" value="A=2-351"/>
</dbReference>
<dbReference type="PDB" id="1Q61">
    <property type="method" value="X-ray"/>
    <property type="resolution" value="2.10 A"/>
    <property type="chains" value="A=2-351"/>
</dbReference>
<dbReference type="PDB" id="1Q62">
    <property type="method" value="X-ray"/>
    <property type="resolution" value="2.30 A"/>
    <property type="chains" value="A=2-351"/>
</dbReference>
<dbReference type="PDB" id="1Q8T">
    <property type="method" value="X-ray"/>
    <property type="resolution" value="2.00 A"/>
    <property type="chains" value="A=2-351"/>
</dbReference>
<dbReference type="PDB" id="1Q8U">
    <property type="method" value="X-ray"/>
    <property type="resolution" value="1.90 A"/>
    <property type="chains" value="A=2-351"/>
</dbReference>
<dbReference type="PDB" id="1Q8W">
    <property type="method" value="X-ray"/>
    <property type="resolution" value="2.20 A"/>
    <property type="chains" value="A=2-351"/>
</dbReference>
<dbReference type="PDB" id="1SMH">
    <property type="method" value="X-ray"/>
    <property type="resolution" value="2.04 A"/>
    <property type="chains" value="A=2-351"/>
</dbReference>
<dbReference type="PDB" id="1STC">
    <property type="method" value="X-ray"/>
    <property type="resolution" value="2.30 A"/>
    <property type="chains" value="E=2-351"/>
</dbReference>
<dbReference type="PDB" id="1SVE">
    <property type="method" value="X-ray"/>
    <property type="resolution" value="2.49 A"/>
    <property type="chains" value="A=2-351"/>
</dbReference>
<dbReference type="PDB" id="1SVG">
    <property type="method" value="X-ray"/>
    <property type="resolution" value="2.02 A"/>
    <property type="chains" value="A=2-351"/>
</dbReference>
<dbReference type="PDB" id="1SVH">
    <property type="method" value="X-ray"/>
    <property type="resolution" value="2.30 A"/>
    <property type="chains" value="A=2-351"/>
</dbReference>
<dbReference type="PDB" id="1SZM">
    <property type="method" value="X-ray"/>
    <property type="resolution" value="2.50 A"/>
    <property type="chains" value="A/B=2-351"/>
</dbReference>
<dbReference type="PDB" id="1VEB">
    <property type="method" value="X-ray"/>
    <property type="resolution" value="2.89 A"/>
    <property type="chains" value="A=2-351"/>
</dbReference>
<dbReference type="PDB" id="1XH4">
    <property type="method" value="X-ray"/>
    <property type="resolution" value="2.45 A"/>
    <property type="chains" value="A=2-351"/>
</dbReference>
<dbReference type="PDB" id="1XH5">
    <property type="method" value="X-ray"/>
    <property type="resolution" value="2.05 A"/>
    <property type="chains" value="A=2-351"/>
</dbReference>
<dbReference type="PDB" id="1XH6">
    <property type="method" value="X-ray"/>
    <property type="resolution" value="1.90 A"/>
    <property type="chains" value="A=2-351"/>
</dbReference>
<dbReference type="PDB" id="1XH7">
    <property type="method" value="X-ray"/>
    <property type="resolution" value="2.47 A"/>
    <property type="chains" value="A=2-351"/>
</dbReference>
<dbReference type="PDB" id="1XH8">
    <property type="method" value="X-ray"/>
    <property type="resolution" value="1.60 A"/>
    <property type="chains" value="A=2-351"/>
</dbReference>
<dbReference type="PDB" id="1XH9">
    <property type="method" value="X-ray"/>
    <property type="resolution" value="1.64 A"/>
    <property type="chains" value="A=2-351"/>
</dbReference>
<dbReference type="PDB" id="1XHA">
    <property type="method" value="X-ray"/>
    <property type="resolution" value="2.46 A"/>
    <property type="chains" value="A=2-351"/>
</dbReference>
<dbReference type="PDB" id="1YDR">
    <property type="method" value="X-ray"/>
    <property type="resolution" value="2.20 A"/>
    <property type="chains" value="E=2-351"/>
</dbReference>
<dbReference type="PDB" id="1YDS">
    <property type="method" value="X-ray"/>
    <property type="resolution" value="2.20 A"/>
    <property type="chains" value="E=2-351"/>
</dbReference>
<dbReference type="PDB" id="1YDT">
    <property type="method" value="X-ray"/>
    <property type="resolution" value="2.30 A"/>
    <property type="chains" value="E=2-351"/>
</dbReference>
<dbReference type="PDB" id="2C1A">
    <property type="method" value="X-ray"/>
    <property type="resolution" value="1.95 A"/>
    <property type="chains" value="A=2-351"/>
</dbReference>
<dbReference type="PDB" id="2C1B">
    <property type="method" value="X-ray"/>
    <property type="resolution" value="2.00 A"/>
    <property type="chains" value="A=2-351"/>
</dbReference>
<dbReference type="PDB" id="2F7E">
    <property type="method" value="X-ray"/>
    <property type="resolution" value="2.00 A"/>
    <property type="chains" value="E=1-351"/>
</dbReference>
<dbReference type="PDB" id="2F7X">
    <property type="method" value="X-ray"/>
    <property type="resolution" value="1.90 A"/>
    <property type="chains" value="E=1-351"/>
</dbReference>
<dbReference type="PDB" id="2F7Z">
    <property type="method" value="X-ray"/>
    <property type="resolution" value="3.00 A"/>
    <property type="chains" value="E=1-351"/>
</dbReference>
<dbReference type="PDB" id="2GFC">
    <property type="method" value="X-ray"/>
    <property type="resolution" value="1.87 A"/>
    <property type="chains" value="A=2-351"/>
</dbReference>
<dbReference type="PDB" id="2GNF">
    <property type="method" value="X-ray"/>
    <property type="resolution" value="2.28 A"/>
    <property type="chains" value="A=2-351"/>
</dbReference>
<dbReference type="PDB" id="2GNG">
    <property type="method" value="X-ray"/>
    <property type="resolution" value="1.87 A"/>
    <property type="chains" value="A=2-351"/>
</dbReference>
<dbReference type="PDB" id="2GNH">
    <property type="method" value="X-ray"/>
    <property type="resolution" value="2.05 A"/>
    <property type="chains" value="A=2-351"/>
</dbReference>
<dbReference type="PDB" id="2GNI">
    <property type="method" value="X-ray"/>
    <property type="resolution" value="2.27 A"/>
    <property type="chains" value="A=2-351"/>
</dbReference>
<dbReference type="PDB" id="2GNJ">
    <property type="method" value="X-ray"/>
    <property type="resolution" value="2.28 A"/>
    <property type="chains" value="A=2-351"/>
</dbReference>
<dbReference type="PDB" id="2GNL">
    <property type="method" value="X-ray"/>
    <property type="resolution" value="2.60 A"/>
    <property type="chains" value="A=2-351"/>
</dbReference>
<dbReference type="PDB" id="2JDS">
    <property type="method" value="X-ray"/>
    <property type="resolution" value="2.00 A"/>
    <property type="chains" value="A=2-351"/>
</dbReference>
<dbReference type="PDB" id="2JDT">
    <property type="method" value="X-ray"/>
    <property type="resolution" value="2.15 A"/>
    <property type="chains" value="A=2-351"/>
</dbReference>
<dbReference type="PDB" id="2JDV">
    <property type="method" value="X-ray"/>
    <property type="resolution" value="2.08 A"/>
    <property type="chains" value="A=2-351"/>
</dbReference>
<dbReference type="PDB" id="2OH0">
    <property type="method" value="X-ray"/>
    <property type="resolution" value="2.20 A"/>
    <property type="chains" value="E=1-351"/>
</dbReference>
<dbReference type="PDB" id="2OJF">
    <property type="method" value="X-ray"/>
    <property type="resolution" value="2.10 A"/>
    <property type="chains" value="E=1-351"/>
</dbReference>
<dbReference type="PDB" id="2UVX">
    <property type="method" value="X-ray"/>
    <property type="resolution" value="2.00 A"/>
    <property type="chains" value="A=2-351"/>
</dbReference>
<dbReference type="PDB" id="2UVY">
    <property type="method" value="X-ray"/>
    <property type="resolution" value="1.95 A"/>
    <property type="chains" value="A=2-351"/>
</dbReference>
<dbReference type="PDB" id="2UVZ">
    <property type="method" value="X-ray"/>
    <property type="resolution" value="1.94 A"/>
    <property type="chains" value="A=2-351"/>
</dbReference>
<dbReference type="PDB" id="2UW0">
    <property type="method" value="X-ray"/>
    <property type="resolution" value="2.00 A"/>
    <property type="chains" value="A=2-351"/>
</dbReference>
<dbReference type="PDB" id="2UW3">
    <property type="method" value="X-ray"/>
    <property type="resolution" value="2.19 A"/>
    <property type="chains" value="A=2-351"/>
</dbReference>
<dbReference type="PDB" id="2UW4">
    <property type="method" value="X-ray"/>
    <property type="resolution" value="2.00 A"/>
    <property type="chains" value="A=2-351"/>
</dbReference>
<dbReference type="PDB" id="2UW5">
    <property type="method" value="X-ray"/>
    <property type="resolution" value="2.14 A"/>
    <property type="chains" value="A=2-351"/>
</dbReference>
<dbReference type="PDB" id="2UW6">
    <property type="method" value="X-ray"/>
    <property type="resolution" value="2.23 A"/>
    <property type="chains" value="A=2-351"/>
</dbReference>
<dbReference type="PDB" id="2UW7">
    <property type="method" value="X-ray"/>
    <property type="resolution" value="2.10 A"/>
    <property type="chains" value="A=2-351"/>
</dbReference>
<dbReference type="PDB" id="2UW8">
    <property type="method" value="X-ray"/>
    <property type="resolution" value="2.00 A"/>
    <property type="chains" value="A=2-351"/>
</dbReference>
<dbReference type="PDB" id="2UZT">
    <property type="method" value="X-ray"/>
    <property type="resolution" value="2.10 A"/>
    <property type="chains" value="A=16-351"/>
</dbReference>
<dbReference type="PDB" id="2UZU">
    <property type="method" value="X-ray"/>
    <property type="resolution" value="2.40 A"/>
    <property type="chains" value="E=16-351"/>
</dbReference>
<dbReference type="PDB" id="2UZV">
    <property type="method" value="X-ray"/>
    <property type="resolution" value="2.50 A"/>
    <property type="chains" value="A=16-351"/>
</dbReference>
<dbReference type="PDB" id="2UZW">
    <property type="method" value="X-ray"/>
    <property type="resolution" value="2.20 A"/>
    <property type="chains" value="E=16-351"/>
</dbReference>
<dbReference type="PDB" id="2VNW">
    <property type="method" value="X-ray"/>
    <property type="resolution" value="2.09 A"/>
    <property type="chains" value="A=1-351"/>
</dbReference>
<dbReference type="PDB" id="2VNY">
    <property type="method" value="X-ray"/>
    <property type="resolution" value="1.96 A"/>
    <property type="chains" value="A=1-351"/>
</dbReference>
<dbReference type="PDB" id="2VO0">
    <property type="method" value="X-ray"/>
    <property type="resolution" value="1.94 A"/>
    <property type="chains" value="A=1-351"/>
</dbReference>
<dbReference type="PDB" id="2VO3">
    <property type="method" value="X-ray"/>
    <property type="resolution" value="1.98 A"/>
    <property type="chains" value="A=1-351"/>
</dbReference>
<dbReference type="PDB" id="2VO6">
    <property type="method" value="X-ray"/>
    <property type="resolution" value="1.97 A"/>
    <property type="chains" value="A=1-351"/>
</dbReference>
<dbReference type="PDB" id="2VO7">
    <property type="method" value="X-ray"/>
    <property type="resolution" value="1.98 A"/>
    <property type="chains" value="A=1-351"/>
</dbReference>
<dbReference type="PDB" id="3AG9">
    <property type="method" value="X-ray"/>
    <property type="resolution" value="2.00 A"/>
    <property type="chains" value="A/B=1-351"/>
</dbReference>
<dbReference type="PDB" id="3BWJ">
    <property type="method" value="X-ray"/>
    <property type="resolution" value="2.30 A"/>
    <property type="chains" value="A=2-351"/>
</dbReference>
<dbReference type="PDB" id="3DND">
    <property type="method" value="X-ray"/>
    <property type="resolution" value="2.26 A"/>
    <property type="chains" value="A=2-351"/>
</dbReference>
<dbReference type="PDB" id="3DNE">
    <property type="method" value="X-ray"/>
    <property type="resolution" value="2.00 A"/>
    <property type="chains" value="A=2-351"/>
</dbReference>
<dbReference type="PDB" id="3E8C">
    <property type="method" value="X-ray"/>
    <property type="resolution" value="2.20 A"/>
    <property type="chains" value="A/B/C/D/E/F=2-351"/>
</dbReference>
<dbReference type="PDB" id="3E8E">
    <property type="method" value="X-ray"/>
    <property type="resolution" value="2.00 A"/>
    <property type="chains" value="A/B/E/I/L/P=2-351"/>
</dbReference>
<dbReference type="PDB" id="3KKV">
    <property type="method" value="X-ray"/>
    <property type="resolution" value="1.80 A"/>
    <property type="chains" value="A=2-351"/>
</dbReference>
<dbReference type="PDB" id="3ZO1">
    <property type="method" value="X-ray"/>
    <property type="resolution" value="2.00 A"/>
    <property type="chains" value="A=1-351"/>
</dbReference>
<dbReference type="PDB" id="3ZO2">
    <property type="method" value="X-ray"/>
    <property type="resolution" value="1.98 A"/>
    <property type="chains" value="A=1-351"/>
</dbReference>
<dbReference type="PDB" id="3ZO3">
    <property type="method" value="X-ray"/>
    <property type="resolution" value="2.10 A"/>
    <property type="chains" value="A=1-351"/>
</dbReference>
<dbReference type="PDB" id="3ZO4">
    <property type="method" value="X-ray"/>
    <property type="resolution" value="1.65 A"/>
    <property type="chains" value="A=1-351"/>
</dbReference>
<dbReference type="PDB" id="4AXA">
    <property type="method" value="X-ray"/>
    <property type="resolution" value="1.90 A"/>
    <property type="chains" value="A=1-351"/>
</dbReference>
<dbReference type="PDB" id="4C33">
    <property type="method" value="X-ray"/>
    <property type="resolution" value="1.70 A"/>
    <property type="chains" value="A=1-351"/>
</dbReference>
<dbReference type="PDB" id="4C34">
    <property type="method" value="X-ray"/>
    <property type="resolution" value="1.78 A"/>
    <property type="chains" value="A=1-351"/>
</dbReference>
<dbReference type="PDB" id="4C35">
    <property type="method" value="X-ray"/>
    <property type="resolution" value="2.19 A"/>
    <property type="chains" value="A=1-351"/>
</dbReference>
<dbReference type="PDB" id="4C36">
    <property type="method" value="X-ray"/>
    <property type="resolution" value="1.98 A"/>
    <property type="chains" value="A=1-351"/>
</dbReference>
<dbReference type="PDB" id="4C37">
    <property type="method" value="X-ray"/>
    <property type="resolution" value="1.70 A"/>
    <property type="chains" value="A=1-351"/>
</dbReference>
<dbReference type="PDB" id="4C38">
    <property type="method" value="X-ray"/>
    <property type="resolution" value="1.58 A"/>
    <property type="chains" value="A=1-351"/>
</dbReference>
<dbReference type="PDB" id="4IE9">
    <property type="method" value="X-ray"/>
    <property type="resolution" value="1.92 A"/>
    <property type="chains" value="A=1-351"/>
</dbReference>
<dbReference type="PDB" id="4IJ9">
    <property type="method" value="X-ray"/>
    <property type="resolution" value="2.55 A"/>
    <property type="chains" value="A=2-351"/>
</dbReference>
<dbReference type="PDB" id="4YXR">
    <property type="method" value="X-ray"/>
    <property type="resolution" value="2.00 A"/>
    <property type="chains" value="A=2-351"/>
</dbReference>
<dbReference type="PDB" id="4YXS">
    <property type="method" value="X-ray"/>
    <property type="resolution" value="2.11 A"/>
    <property type="chains" value="A=2-351"/>
</dbReference>
<dbReference type="PDB" id="4Z83">
    <property type="method" value="X-ray"/>
    <property type="resolution" value="1.80 A"/>
    <property type="chains" value="E=2-351"/>
</dbReference>
<dbReference type="PDB" id="4Z84">
    <property type="method" value="X-ray"/>
    <property type="resolution" value="1.55 A"/>
    <property type="chains" value="A=1-351"/>
</dbReference>
<dbReference type="PDB" id="5VHB">
    <property type="method" value="X-ray"/>
    <property type="resolution" value="1.61 A"/>
    <property type="chains" value="A=1-351"/>
</dbReference>
<dbReference type="PDB" id="5VI9">
    <property type="method" value="X-ray"/>
    <property type="resolution" value="1.95 A"/>
    <property type="chains" value="A=1-351"/>
</dbReference>
<dbReference type="PDB" id="5VIB">
    <property type="method" value="X-ray"/>
    <property type="resolution" value="2.37 A"/>
    <property type="chains" value="A=1-351"/>
</dbReference>
<dbReference type="PDB" id="6E99">
    <property type="method" value="X-ray"/>
    <property type="resolution" value="1.88 A"/>
    <property type="chains" value="A=1-351"/>
</dbReference>
<dbReference type="PDB" id="6E9L">
    <property type="method" value="X-ray"/>
    <property type="resolution" value="2.80 A"/>
    <property type="chains" value="A=1-351"/>
</dbReference>
<dbReference type="PDB" id="8SF8">
    <property type="method" value="X-ray"/>
    <property type="resolution" value="1.70 A"/>
    <property type="chains" value="A=1-351"/>
</dbReference>
<dbReference type="PDB" id="9DW4">
    <property type="method" value="EM"/>
    <property type="resolution" value="9.00 A"/>
    <property type="chains" value="K=1-351"/>
</dbReference>
<dbReference type="PDB" id="9DW5">
    <property type="method" value="EM"/>
    <property type="resolution" value="3.80 A"/>
    <property type="chains" value="G=1-351"/>
</dbReference>
<dbReference type="PDB" id="9DW7">
    <property type="method" value="EM"/>
    <property type="resolution" value="6.00 A"/>
    <property type="chains" value="G/K=1-351"/>
</dbReference>
<dbReference type="PDB" id="9DW8">
    <property type="method" value="EM"/>
    <property type="resolution" value="3.50 A"/>
    <property type="chains" value="G=1-351"/>
</dbReference>
<dbReference type="PDB" id="9DW9">
    <property type="method" value="EM"/>
    <property type="resolution" value="2.80 A"/>
    <property type="chains" value="G=1-351"/>
</dbReference>
<dbReference type="PDBsum" id="1Q24"/>
<dbReference type="PDBsum" id="1Q61"/>
<dbReference type="PDBsum" id="1Q62"/>
<dbReference type="PDBsum" id="1Q8T"/>
<dbReference type="PDBsum" id="1Q8U"/>
<dbReference type="PDBsum" id="1Q8W"/>
<dbReference type="PDBsum" id="1SMH"/>
<dbReference type="PDBsum" id="1STC"/>
<dbReference type="PDBsum" id="1SVE"/>
<dbReference type="PDBsum" id="1SVG"/>
<dbReference type="PDBsum" id="1SVH"/>
<dbReference type="PDBsum" id="1SZM"/>
<dbReference type="PDBsum" id="1VEB"/>
<dbReference type="PDBsum" id="1XH4"/>
<dbReference type="PDBsum" id="1XH5"/>
<dbReference type="PDBsum" id="1XH6"/>
<dbReference type="PDBsum" id="1XH7"/>
<dbReference type="PDBsum" id="1XH8"/>
<dbReference type="PDBsum" id="1XH9"/>
<dbReference type="PDBsum" id="1XHA"/>
<dbReference type="PDBsum" id="1YDR"/>
<dbReference type="PDBsum" id="1YDS"/>
<dbReference type="PDBsum" id="1YDT"/>
<dbReference type="PDBsum" id="2C1A"/>
<dbReference type="PDBsum" id="2C1B"/>
<dbReference type="PDBsum" id="2F7E"/>
<dbReference type="PDBsum" id="2F7X"/>
<dbReference type="PDBsum" id="2F7Z"/>
<dbReference type="PDBsum" id="2GFC"/>
<dbReference type="PDBsum" id="2GNF"/>
<dbReference type="PDBsum" id="2GNG"/>
<dbReference type="PDBsum" id="2GNH"/>
<dbReference type="PDBsum" id="2GNI"/>
<dbReference type="PDBsum" id="2GNJ"/>
<dbReference type="PDBsum" id="2GNL"/>
<dbReference type="PDBsum" id="2JDS"/>
<dbReference type="PDBsum" id="2JDT"/>
<dbReference type="PDBsum" id="2JDV"/>
<dbReference type="PDBsum" id="2OH0"/>
<dbReference type="PDBsum" id="2OJF"/>
<dbReference type="PDBsum" id="2UVX"/>
<dbReference type="PDBsum" id="2UVY"/>
<dbReference type="PDBsum" id="2UVZ"/>
<dbReference type="PDBsum" id="2UW0"/>
<dbReference type="PDBsum" id="2UW3"/>
<dbReference type="PDBsum" id="2UW4"/>
<dbReference type="PDBsum" id="2UW5"/>
<dbReference type="PDBsum" id="2UW6"/>
<dbReference type="PDBsum" id="2UW7"/>
<dbReference type="PDBsum" id="2UW8"/>
<dbReference type="PDBsum" id="2UZT"/>
<dbReference type="PDBsum" id="2UZU"/>
<dbReference type="PDBsum" id="2UZV"/>
<dbReference type="PDBsum" id="2UZW"/>
<dbReference type="PDBsum" id="2VNW"/>
<dbReference type="PDBsum" id="2VNY"/>
<dbReference type="PDBsum" id="2VO0"/>
<dbReference type="PDBsum" id="2VO3"/>
<dbReference type="PDBsum" id="2VO6"/>
<dbReference type="PDBsum" id="2VO7"/>
<dbReference type="PDBsum" id="3AG9"/>
<dbReference type="PDBsum" id="3BWJ"/>
<dbReference type="PDBsum" id="3DND"/>
<dbReference type="PDBsum" id="3DNE"/>
<dbReference type="PDBsum" id="3E8C"/>
<dbReference type="PDBsum" id="3E8E"/>
<dbReference type="PDBsum" id="3KKV"/>
<dbReference type="PDBsum" id="3ZO1"/>
<dbReference type="PDBsum" id="3ZO2"/>
<dbReference type="PDBsum" id="3ZO3"/>
<dbReference type="PDBsum" id="3ZO4"/>
<dbReference type="PDBsum" id="4AXA"/>
<dbReference type="PDBsum" id="4C33"/>
<dbReference type="PDBsum" id="4C34"/>
<dbReference type="PDBsum" id="4C35"/>
<dbReference type="PDBsum" id="4C36"/>
<dbReference type="PDBsum" id="4C37"/>
<dbReference type="PDBsum" id="4C38"/>
<dbReference type="PDBsum" id="4IE9"/>
<dbReference type="PDBsum" id="4IJ9"/>
<dbReference type="PDBsum" id="4YXR"/>
<dbReference type="PDBsum" id="4YXS"/>
<dbReference type="PDBsum" id="4Z83"/>
<dbReference type="PDBsum" id="4Z84"/>
<dbReference type="PDBsum" id="5VHB"/>
<dbReference type="PDBsum" id="5VI9"/>
<dbReference type="PDBsum" id="5VIB"/>
<dbReference type="PDBsum" id="6E99"/>
<dbReference type="PDBsum" id="6E9L"/>
<dbReference type="PDBsum" id="8SF8"/>
<dbReference type="PDBsum" id="9DW4"/>
<dbReference type="PDBsum" id="9DW5"/>
<dbReference type="PDBsum" id="9DW7"/>
<dbReference type="PDBsum" id="9DW8"/>
<dbReference type="PDBsum" id="9DW9"/>
<dbReference type="BMRB" id="P00517"/>
<dbReference type="EMDB" id="EMD-47235"/>
<dbReference type="EMDB" id="EMD-47236"/>
<dbReference type="EMDB" id="EMD-47237"/>
<dbReference type="EMDB" id="EMD-47238"/>
<dbReference type="EMDB" id="EMD-47239"/>
<dbReference type="EMDB" id="EMD-50664"/>
<dbReference type="SMR" id="P00517"/>
<dbReference type="BioGRID" id="159584">
    <property type="interactions" value="13"/>
</dbReference>
<dbReference type="ELM" id="P00517"/>
<dbReference type="FunCoup" id="P00517">
    <property type="interactions" value="3254"/>
</dbReference>
<dbReference type="IntAct" id="P00517">
    <property type="interactions" value="4"/>
</dbReference>
<dbReference type="MINT" id="P00517"/>
<dbReference type="STRING" id="9913.ENSBTAP00000063436"/>
<dbReference type="BindingDB" id="P00517"/>
<dbReference type="ChEMBL" id="CHEMBL2654"/>
<dbReference type="DrugCentral" id="P00517"/>
<dbReference type="iPTMnet" id="P00517"/>
<dbReference type="PaxDb" id="9913-ENSBTAP00000008727"/>
<dbReference type="PeptideAtlas" id="P00517"/>
<dbReference type="Ensembl" id="ENSBTAT00000008727.5">
    <property type="protein sequence ID" value="ENSBTAP00000008727.5"/>
    <property type="gene ID" value="ENSBTAG00000006642.6"/>
</dbReference>
<dbReference type="GeneID" id="282322"/>
<dbReference type="KEGG" id="bta:282322"/>
<dbReference type="CTD" id="5566"/>
<dbReference type="VEuPathDB" id="HostDB:ENSBTAG00000006642"/>
<dbReference type="VGNC" id="VGNC:50250">
    <property type="gene designation" value="PRKACA"/>
</dbReference>
<dbReference type="eggNOG" id="KOG0616">
    <property type="taxonomic scope" value="Eukaryota"/>
</dbReference>
<dbReference type="GeneTree" id="ENSGT00940000162186"/>
<dbReference type="HOGENOM" id="CLU_000288_63_5_1"/>
<dbReference type="InParanoid" id="P00517"/>
<dbReference type="OMA" id="NDPFFDW"/>
<dbReference type="OrthoDB" id="63267at2759"/>
<dbReference type="TreeFam" id="TF313399"/>
<dbReference type="BRENDA" id="2.7.11.11">
    <property type="organism ID" value="908"/>
</dbReference>
<dbReference type="Reactome" id="R-BTA-163615">
    <property type="pathway name" value="PKA activation"/>
</dbReference>
<dbReference type="Reactome" id="R-BTA-164378">
    <property type="pathway name" value="PKA activation in glucagon signalling"/>
</dbReference>
<dbReference type="Reactome" id="R-BTA-180024">
    <property type="pathway name" value="DARPP-32 events"/>
</dbReference>
<dbReference type="Reactome" id="R-BTA-2565942">
    <property type="pathway name" value="Regulation of PLK1 Activity at G2/M Transition"/>
</dbReference>
<dbReference type="Reactome" id="R-BTA-380259">
    <property type="pathway name" value="Loss of Nlp from mitotic centrosomes"/>
</dbReference>
<dbReference type="Reactome" id="R-BTA-380270">
    <property type="pathway name" value="Recruitment of mitotic centrosome proteins and complexes"/>
</dbReference>
<dbReference type="Reactome" id="R-BTA-380284">
    <property type="pathway name" value="Loss of proteins required for interphase microtubule organization from the centrosome"/>
</dbReference>
<dbReference type="Reactome" id="R-BTA-380320">
    <property type="pathway name" value="Recruitment of NuMA to mitotic centrosomes"/>
</dbReference>
<dbReference type="Reactome" id="R-BTA-381676">
    <property type="pathway name" value="Glucagon-like Peptide-1 (GLP1) regulates insulin secretion"/>
</dbReference>
<dbReference type="Reactome" id="R-BTA-392517">
    <property type="pathway name" value="Rap1 signalling"/>
</dbReference>
<dbReference type="Reactome" id="R-BTA-422356">
    <property type="pathway name" value="Regulation of insulin secretion"/>
</dbReference>
<dbReference type="Reactome" id="R-BTA-432040">
    <property type="pathway name" value="Vasopressin regulates renal water homeostasis via Aquaporins"/>
</dbReference>
<dbReference type="Reactome" id="R-BTA-4420097">
    <property type="pathway name" value="VEGFA-VEGFR2 Pathway"/>
</dbReference>
<dbReference type="Reactome" id="R-BTA-442720">
    <property type="pathway name" value="CREB1 phosphorylation through the activation of Adenylate Cyclase"/>
</dbReference>
<dbReference type="Reactome" id="R-BTA-512988">
    <property type="pathway name" value="Interleukin-3, Interleukin-5 and GM-CSF signaling"/>
</dbReference>
<dbReference type="Reactome" id="R-BTA-5578775">
    <property type="pathway name" value="Ion homeostasis"/>
</dbReference>
<dbReference type="Reactome" id="R-BTA-5610785">
    <property type="pathway name" value="GLI3 is processed to GLI3R by the proteasome"/>
</dbReference>
<dbReference type="Reactome" id="R-BTA-5610787">
    <property type="pathway name" value="Hedgehog 'off' state"/>
</dbReference>
<dbReference type="Reactome" id="R-BTA-5620912">
    <property type="pathway name" value="Anchoring of the basal body to the plasma membrane"/>
</dbReference>
<dbReference type="Reactome" id="R-BTA-5621575">
    <property type="pathway name" value="CD209 (DC-SIGN) signaling"/>
</dbReference>
<dbReference type="Reactome" id="R-BTA-5687128">
    <property type="pathway name" value="MAPK6/MAPK4 signaling"/>
</dbReference>
<dbReference type="Reactome" id="R-BTA-8853659">
    <property type="pathway name" value="RET signaling"/>
</dbReference>
<dbReference type="Reactome" id="R-BTA-8854518">
    <property type="pathway name" value="AURKA Activation by TPX2"/>
</dbReference>
<dbReference type="Reactome" id="R-BTA-8963896">
    <property type="pathway name" value="HDL assembly"/>
</dbReference>
<dbReference type="Reactome" id="R-BTA-9634597">
    <property type="pathway name" value="GPER1 signaling"/>
</dbReference>
<dbReference type="Reactome" id="R-BTA-983231">
    <property type="pathway name" value="Factors involved in megakaryocyte development and platelet production"/>
</dbReference>
<dbReference type="Reactome" id="R-BTA-9837999">
    <property type="pathway name" value="Mitochondrial protein degradation"/>
</dbReference>
<dbReference type="Reactome" id="R-BTA-9856530">
    <property type="pathway name" value="High laminar flow shear stress activates signaling by PIEZO1 and PECAM1:CDH5:KDR in endothelial cells"/>
</dbReference>
<dbReference type="EvolutionaryTrace" id="P00517"/>
<dbReference type="PRO" id="PR:P00517"/>
<dbReference type="Proteomes" id="UP000009136">
    <property type="component" value="Chromosome 7"/>
</dbReference>
<dbReference type="Bgee" id="ENSBTAG00000006642">
    <property type="expression patterns" value="Expressed in corpus luteum and 104 other cell types or tissues"/>
</dbReference>
<dbReference type="GO" id="GO:0001669">
    <property type="term" value="C:acrosomal vesicle"/>
    <property type="evidence" value="ECO:0000250"/>
    <property type="project" value="UniProtKB"/>
</dbReference>
<dbReference type="GO" id="GO:0005930">
    <property type="term" value="C:axoneme"/>
    <property type="evidence" value="ECO:0007669"/>
    <property type="project" value="Ensembl"/>
</dbReference>
<dbReference type="GO" id="GO:0005952">
    <property type="term" value="C:cAMP-dependent protein kinase complex"/>
    <property type="evidence" value="ECO:0000318"/>
    <property type="project" value="GO_Central"/>
</dbReference>
<dbReference type="GO" id="GO:0005813">
    <property type="term" value="C:centrosome"/>
    <property type="evidence" value="ECO:0007669"/>
    <property type="project" value="Ensembl"/>
</dbReference>
<dbReference type="GO" id="GO:0097546">
    <property type="term" value="C:ciliary base"/>
    <property type="evidence" value="ECO:0007669"/>
    <property type="project" value="Ensembl"/>
</dbReference>
<dbReference type="GO" id="GO:0005737">
    <property type="term" value="C:cytoplasm"/>
    <property type="evidence" value="ECO:0000250"/>
    <property type="project" value="UniProtKB"/>
</dbReference>
<dbReference type="GO" id="GO:0005829">
    <property type="term" value="C:cytosol"/>
    <property type="evidence" value="ECO:0000318"/>
    <property type="project" value="GO_Central"/>
</dbReference>
<dbReference type="GO" id="GO:0098978">
    <property type="term" value="C:glutamatergic synapse"/>
    <property type="evidence" value="ECO:0007669"/>
    <property type="project" value="Ensembl"/>
</dbReference>
<dbReference type="GO" id="GO:0005739">
    <property type="term" value="C:mitochondrion"/>
    <property type="evidence" value="ECO:0007669"/>
    <property type="project" value="UniProtKB-SubCell"/>
</dbReference>
<dbReference type="GO" id="GO:0031594">
    <property type="term" value="C:neuromuscular junction"/>
    <property type="evidence" value="ECO:0000250"/>
    <property type="project" value="AgBase"/>
</dbReference>
<dbReference type="GO" id="GO:0016607">
    <property type="term" value="C:nuclear speck"/>
    <property type="evidence" value="ECO:0007669"/>
    <property type="project" value="Ensembl"/>
</dbReference>
<dbReference type="GO" id="GO:0005634">
    <property type="term" value="C:nucleus"/>
    <property type="evidence" value="ECO:0000250"/>
    <property type="project" value="UniProtKB"/>
</dbReference>
<dbReference type="GO" id="GO:0048471">
    <property type="term" value="C:perinuclear region of cytoplasm"/>
    <property type="evidence" value="ECO:0000250"/>
    <property type="project" value="UniProtKB"/>
</dbReference>
<dbReference type="GO" id="GO:0044853">
    <property type="term" value="C:plasma membrane raft"/>
    <property type="evidence" value="ECO:0007669"/>
    <property type="project" value="Ensembl"/>
</dbReference>
<dbReference type="GO" id="GO:0098794">
    <property type="term" value="C:postsynapse"/>
    <property type="evidence" value="ECO:0007669"/>
    <property type="project" value="GOC"/>
</dbReference>
<dbReference type="GO" id="GO:0036126">
    <property type="term" value="C:sperm flagellum"/>
    <property type="evidence" value="ECO:0000250"/>
    <property type="project" value="UniProtKB"/>
</dbReference>
<dbReference type="GO" id="GO:0005524">
    <property type="term" value="F:ATP binding"/>
    <property type="evidence" value="ECO:0007669"/>
    <property type="project" value="UniProtKB-KW"/>
</dbReference>
<dbReference type="GO" id="GO:0004691">
    <property type="term" value="F:cAMP-dependent protein kinase activity"/>
    <property type="evidence" value="ECO:0000315"/>
    <property type="project" value="CAFA"/>
</dbReference>
<dbReference type="GO" id="GO:0000287">
    <property type="term" value="F:magnesium ion binding"/>
    <property type="evidence" value="ECO:0007669"/>
    <property type="project" value="Ensembl"/>
</dbReference>
<dbReference type="GO" id="GO:0030145">
    <property type="term" value="F:manganese ion binding"/>
    <property type="evidence" value="ECO:0007669"/>
    <property type="project" value="Ensembl"/>
</dbReference>
<dbReference type="GO" id="GO:0019904">
    <property type="term" value="F:protein domain specific binding"/>
    <property type="evidence" value="ECO:0000353"/>
    <property type="project" value="CAFA"/>
</dbReference>
<dbReference type="GO" id="GO:0034237">
    <property type="term" value="F:protein kinase A regulatory subunit binding"/>
    <property type="evidence" value="ECO:0000318"/>
    <property type="project" value="GO_Central"/>
</dbReference>
<dbReference type="GO" id="GO:0004672">
    <property type="term" value="F:protein kinase activity"/>
    <property type="evidence" value="ECO:0000250"/>
    <property type="project" value="AgBase"/>
</dbReference>
<dbReference type="GO" id="GO:0019901">
    <property type="term" value="F:protein kinase binding"/>
    <property type="evidence" value="ECO:0007669"/>
    <property type="project" value="Ensembl"/>
</dbReference>
<dbReference type="GO" id="GO:0106310">
    <property type="term" value="F:protein serine kinase activity"/>
    <property type="evidence" value="ECO:0007669"/>
    <property type="project" value="Ensembl"/>
</dbReference>
<dbReference type="GO" id="GO:0004674">
    <property type="term" value="F:protein serine/threonine kinase activity"/>
    <property type="evidence" value="ECO:0000250"/>
    <property type="project" value="UniProtKB"/>
</dbReference>
<dbReference type="GO" id="GO:0004712">
    <property type="term" value="F:protein serine/threonine/tyrosine kinase activity"/>
    <property type="evidence" value="ECO:0007669"/>
    <property type="project" value="Ensembl"/>
</dbReference>
<dbReference type="GO" id="GO:0031625">
    <property type="term" value="F:ubiquitin protein ligase binding"/>
    <property type="evidence" value="ECO:0007669"/>
    <property type="project" value="Ensembl"/>
</dbReference>
<dbReference type="GO" id="GO:0007189">
    <property type="term" value="P:adenylate cyclase-activating G protein-coupled receptor signaling pathway"/>
    <property type="evidence" value="ECO:0007669"/>
    <property type="project" value="Ensembl"/>
</dbReference>
<dbReference type="GO" id="GO:0007193">
    <property type="term" value="P:adenylate cyclase-inhibiting G protein-coupled receptor signaling pathway"/>
    <property type="evidence" value="ECO:0007669"/>
    <property type="project" value="Ensembl"/>
</dbReference>
<dbReference type="GO" id="GO:0070417">
    <property type="term" value="P:cellular response to cold"/>
    <property type="evidence" value="ECO:0007669"/>
    <property type="project" value="Ensembl"/>
</dbReference>
<dbReference type="GO" id="GO:0071377">
    <property type="term" value="P:cellular response to glucagon stimulus"/>
    <property type="evidence" value="ECO:0007669"/>
    <property type="project" value="Ensembl"/>
</dbReference>
<dbReference type="GO" id="GO:0071333">
    <property type="term" value="P:cellular response to glucose stimulus"/>
    <property type="evidence" value="ECO:0007669"/>
    <property type="project" value="Ensembl"/>
</dbReference>
<dbReference type="GO" id="GO:0034605">
    <property type="term" value="P:cellular response to heat"/>
    <property type="evidence" value="ECO:0000250"/>
    <property type="project" value="UniProtKB"/>
</dbReference>
<dbReference type="GO" id="GO:0071374">
    <property type="term" value="P:cellular response to parathyroid hormone stimulus"/>
    <property type="evidence" value="ECO:0007669"/>
    <property type="project" value="Ensembl"/>
</dbReference>
<dbReference type="GO" id="GO:0030007">
    <property type="term" value="P:intracellular potassium ion homeostasis"/>
    <property type="evidence" value="ECO:0007669"/>
    <property type="project" value="Ensembl"/>
</dbReference>
<dbReference type="GO" id="GO:0001707">
    <property type="term" value="P:mesoderm formation"/>
    <property type="evidence" value="ECO:0000250"/>
    <property type="project" value="AgBase"/>
</dbReference>
<dbReference type="GO" id="GO:0006397">
    <property type="term" value="P:mRNA processing"/>
    <property type="evidence" value="ECO:0007669"/>
    <property type="project" value="Ensembl"/>
</dbReference>
<dbReference type="GO" id="GO:1904539">
    <property type="term" value="P:negative regulation of glycolytic process through fructose-6-phosphate"/>
    <property type="evidence" value="ECO:0007669"/>
    <property type="project" value="Ensembl"/>
</dbReference>
<dbReference type="GO" id="GO:0045879">
    <property type="term" value="P:negative regulation of smoothened signaling pathway"/>
    <property type="evidence" value="ECO:0007669"/>
    <property type="project" value="Ensembl"/>
</dbReference>
<dbReference type="GO" id="GO:1904262">
    <property type="term" value="P:negative regulation of TORC1 signaling"/>
    <property type="evidence" value="ECO:0000250"/>
    <property type="project" value="UniProtKB"/>
</dbReference>
<dbReference type="GO" id="GO:0001843">
    <property type="term" value="P:neural tube closure"/>
    <property type="evidence" value="ECO:0007669"/>
    <property type="project" value="Ensembl"/>
</dbReference>
<dbReference type="GO" id="GO:0018105">
    <property type="term" value="P:peptidyl-serine phosphorylation"/>
    <property type="evidence" value="ECO:0000315"/>
    <property type="project" value="CAFA"/>
</dbReference>
<dbReference type="GO" id="GO:0045542">
    <property type="term" value="P:positive regulation of cholesterol biosynthetic process"/>
    <property type="evidence" value="ECO:0007669"/>
    <property type="project" value="Ensembl"/>
</dbReference>
<dbReference type="GO" id="GO:0045722">
    <property type="term" value="P:positive regulation of gluconeogenesis"/>
    <property type="evidence" value="ECO:0007669"/>
    <property type="project" value="Ensembl"/>
</dbReference>
<dbReference type="GO" id="GO:0032024">
    <property type="term" value="P:positive regulation of insulin secretion"/>
    <property type="evidence" value="ECO:0007669"/>
    <property type="project" value="Ensembl"/>
</dbReference>
<dbReference type="GO" id="GO:0050766">
    <property type="term" value="P:positive regulation of phagocytosis"/>
    <property type="evidence" value="ECO:0007669"/>
    <property type="project" value="Ensembl"/>
</dbReference>
<dbReference type="GO" id="GO:0046827">
    <property type="term" value="P:positive regulation of protein export from nucleus"/>
    <property type="evidence" value="ECO:0007669"/>
    <property type="project" value="Ensembl"/>
</dbReference>
<dbReference type="GO" id="GO:0099170">
    <property type="term" value="P:postsynaptic modulation of chemical synaptic transmission"/>
    <property type="evidence" value="ECO:0007669"/>
    <property type="project" value="Ensembl"/>
</dbReference>
<dbReference type="GO" id="GO:0006611">
    <property type="term" value="P:protein export from nucleus"/>
    <property type="evidence" value="ECO:0007669"/>
    <property type="project" value="Ensembl"/>
</dbReference>
<dbReference type="GO" id="GO:1990044">
    <property type="term" value="P:protein localization to lipid droplet"/>
    <property type="evidence" value="ECO:0007669"/>
    <property type="project" value="Ensembl"/>
</dbReference>
<dbReference type="GO" id="GO:0006468">
    <property type="term" value="P:protein phosphorylation"/>
    <property type="evidence" value="ECO:0000250"/>
    <property type="project" value="AgBase"/>
</dbReference>
<dbReference type="GO" id="GO:2000810">
    <property type="term" value="P:regulation of bicellular tight junction assembly"/>
    <property type="evidence" value="ECO:0007669"/>
    <property type="project" value="Ensembl"/>
</dbReference>
<dbReference type="GO" id="GO:0051726">
    <property type="term" value="P:regulation of cell cycle"/>
    <property type="evidence" value="ECO:0007669"/>
    <property type="project" value="Ensembl"/>
</dbReference>
<dbReference type="GO" id="GO:0045667">
    <property type="term" value="P:regulation of osteoblast differentiation"/>
    <property type="evidence" value="ECO:0007669"/>
    <property type="project" value="Ensembl"/>
</dbReference>
<dbReference type="GO" id="GO:0061136">
    <property type="term" value="P:regulation of proteasomal protein catabolic process"/>
    <property type="evidence" value="ECO:0007669"/>
    <property type="project" value="Ensembl"/>
</dbReference>
<dbReference type="GO" id="GO:0070613">
    <property type="term" value="P:regulation of protein processing"/>
    <property type="evidence" value="ECO:0007669"/>
    <property type="project" value="Ensembl"/>
</dbReference>
<dbReference type="GO" id="GO:0007165">
    <property type="term" value="P:signal transduction"/>
    <property type="evidence" value="ECO:0000318"/>
    <property type="project" value="GO_Central"/>
</dbReference>
<dbReference type="GO" id="GO:0048240">
    <property type="term" value="P:sperm capacitation"/>
    <property type="evidence" value="ECO:0007669"/>
    <property type="project" value="Ensembl"/>
</dbReference>
<dbReference type="CDD" id="cd14209">
    <property type="entry name" value="STKc_PKA"/>
    <property type="match status" value="1"/>
</dbReference>
<dbReference type="FunFam" id="3.30.200.20:FF:000005">
    <property type="entry name" value="cAMP-dependent protein kinase catalytic subunit"/>
    <property type="match status" value="1"/>
</dbReference>
<dbReference type="FunFam" id="1.10.510.10:FF:000005">
    <property type="entry name" value="cAMP-dependent protein kinase catalytic subunit alpha"/>
    <property type="match status" value="1"/>
</dbReference>
<dbReference type="Gene3D" id="3.30.200.20">
    <property type="entry name" value="Phosphorylase Kinase, domain 1"/>
    <property type="match status" value="1"/>
</dbReference>
<dbReference type="Gene3D" id="1.10.510.10">
    <property type="entry name" value="Transferase(Phosphotransferase) domain 1"/>
    <property type="match status" value="1"/>
</dbReference>
<dbReference type="IDEAL" id="IID50134"/>
<dbReference type="InterPro" id="IPR000961">
    <property type="entry name" value="AGC-kinase_C"/>
</dbReference>
<dbReference type="InterPro" id="IPR011009">
    <property type="entry name" value="Kinase-like_dom_sf"/>
</dbReference>
<dbReference type="InterPro" id="IPR000719">
    <property type="entry name" value="Prot_kinase_dom"/>
</dbReference>
<dbReference type="InterPro" id="IPR017441">
    <property type="entry name" value="Protein_kinase_ATP_BS"/>
</dbReference>
<dbReference type="InterPro" id="IPR008271">
    <property type="entry name" value="Ser/Thr_kinase_AS"/>
</dbReference>
<dbReference type="InterPro" id="IPR044109">
    <property type="entry name" value="STKc_PKA"/>
</dbReference>
<dbReference type="PANTHER" id="PTHR24353:SF82">
    <property type="entry name" value="CAMP-DEPENDENT PROTEIN KINASE CATALYTIC SUBUNIT ALPHA"/>
    <property type="match status" value="1"/>
</dbReference>
<dbReference type="PANTHER" id="PTHR24353">
    <property type="entry name" value="CYCLIC NUCLEOTIDE-DEPENDENT PROTEIN KINASE"/>
    <property type="match status" value="1"/>
</dbReference>
<dbReference type="Pfam" id="PF00069">
    <property type="entry name" value="Pkinase"/>
    <property type="match status" value="1"/>
</dbReference>
<dbReference type="SMART" id="SM00133">
    <property type="entry name" value="S_TK_X"/>
    <property type="match status" value="1"/>
</dbReference>
<dbReference type="SMART" id="SM00220">
    <property type="entry name" value="S_TKc"/>
    <property type="match status" value="1"/>
</dbReference>
<dbReference type="SUPFAM" id="SSF56112">
    <property type="entry name" value="Protein kinase-like (PK-like)"/>
    <property type="match status" value="1"/>
</dbReference>
<dbReference type="PROSITE" id="PS51285">
    <property type="entry name" value="AGC_KINASE_CTER"/>
    <property type="match status" value="1"/>
</dbReference>
<dbReference type="PROSITE" id="PS00107">
    <property type="entry name" value="PROTEIN_KINASE_ATP"/>
    <property type="match status" value="1"/>
</dbReference>
<dbReference type="PROSITE" id="PS50011">
    <property type="entry name" value="PROTEIN_KINASE_DOM"/>
    <property type="match status" value="1"/>
</dbReference>
<dbReference type="PROSITE" id="PS00108">
    <property type="entry name" value="PROTEIN_KINASE_ST"/>
    <property type="match status" value="1"/>
</dbReference>
<organism>
    <name type="scientific">Bos taurus</name>
    <name type="common">Bovine</name>
    <dbReference type="NCBI Taxonomy" id="9913"/>
    <lineage>
        <taxon>Eukaryota</taxon>
        <taxon>Metazoa</taxon>
        <taxon>Chordata</taxon>
        <taxon>Craniata</taxon>
        <taxon>Vertebrata</taxon>
        <taxon>Euteleostomi</taxon>
        <taxon>Mammalia</taxon>
        <taxon>Eutheria</taxon>
        <taxon>Laurasiatheria</taxon>
        <taxon>Artiodactyla</taxon>
        <taxon>Ruminantia</taxon>
        <taxon>Pecora</taxon>
        <taxon>Bovidae</taxon>
        <taxon>Bovinae</taxon>
        <taxon>Bos</taxon>
    </lineage>
</organism>
<accession>P00517</accession>
<comment type="function">
    <text evidence="1 2 3">Phosphorylates a large number of substrates in the cytoplasm and the nucleus (By similarity). Phosphorylates CDC25B, ABL1, NFKB1, CLDN3, PSMC5/RPT6, PJA2, RYR2, RORA, SOX9 and VASP (By similarity). Regulates the abundance of compartmentalized pools of its regulatory subunits through phosphorylation of PJA2 which binds and ubiquitinates these subunits, leading to their subsequent proteolysis. RORA is activated by phosphorylation. Required for glucose-mediated adipogenic differentiation increase and osteogenic differentiation inhibition from osteoblasts (By similarity). Involved in chondrogenesis by mediating phosphorylation of SOX9 (By similarity). Involved in the regulation of platelets in response to thrombin and collagen; maintains circulating platelets in a resting state by phosphorylating proteins in numerous platelet inhibitory pathways when in complex with NF-kappa-B (NFKB1 and NFKB2) and I-kappa-B-alpha (NFKBIA), but thrombin and collagen disrupt these complexes and free active PRKACA stimulates platelets and leads to platelet aggregation by phosphorylating VASP. RYR2 channel activity is potentiated by phosphorylation in presence of luminal Ca(2+), leading to reduced amplitude and increased frequency of store overload-induced Ca(2+) release (SOICR) characterized by an increased rate of Ca(2+) release and propagation velocity of spontaneous Ca(2+) waves, despite reduced wave amplitude and resting cytosolic Ca(2+). PSMC5/RPT6 activation by phosphorylation stimulates proteasome. Negatively regulates tight junctions (TJs) in ovarian cancer cells via CLDN3 phosphorylation. NFKB1 phosphorylation promotes NF-kappa-B p50-p50 DNA binding. Required for phosphorylation of GLI transcription factors which inhibits them and prevents transcriptional activation of Hedgehog signaling pathway target genes (By similarity). GLI transcription factor phosphorylation is inhibited by interaction of PRKACA with SMO which sequesters PRKACA at the cell membrane (By similarity). Involved in embryonic development by down-regulating the Hedgehog (Hh) signaling pathway that determines embryo pattern formation and morphogenesis most probably through the regulation of OFD1 in ciliogenesis (By similarity). Prevents meiosis resumption in prophase-arrested oocytes via CDC25B inactivation by phosphorylation (By similarity). May also regulate rapid eye movement (REM) sleep in the pedunculopontine tegmental (PPT) (By similarity). Phosphorylates APOBEC3G and AICDA. Phosphorylates HSF1; this phosphorylation promotes HSF1 nuclear localization and transcriptional activity upon heat shock (By similarity). Acts as a negative regulator of mTORC1 by mediating phosphorylation of RPTOR (By similarity).</text>
</comment>
<comment type="catalytic activity">
    <reaction>
        <text>L-seryl-[protein] + ATP = O-phospho-L-seryl-[protein] + ADP + H(+)</text>
        <dbReference type="Rhea" id="RHEA:17989"/>
        <dbReference type="Rhea" id="RHEA-COMP:9863"/>
        <dbReference type="Rhea" id="RHEA-COMP:11604"/>
        <dbReference type="ChEBI" id="CHEBI:15378"/>
        <dbReference type="ChEBI" id="CHEBI:29999"/>
        <dbReference type="ChEBI" id="CHEBI:30616"/>
        <dbReference type="ChEBI" id="CHEBI:83421"/>
        <dbReference type="ChEBI" id="CHEBI:456216"/>
        <dbReference type="EC" id="2.7.11.11"/>
    </reaction>
</comment>
<comment type="catalytic activity">
    <reaction>
        <text>L-threonyl-[protein] + ATP = O-phospho-L-threonyl-[protein] + ADP + H(+)</text>
        <dbReference type="Rhea" id="RHEA:46608"/>
        <dbReference type="Rhea" id="RHEA-COMP:11060"/>
        <dbReference type="Rhea" id="RHEA-COMP:11605"/>
        <dbReference type="ChEBI" id="CHEBI:15378"/>
        <dbReference type="ChEBI" id="CHEBI:30013"/>
        <dbReference type="ChEBI" id="CHEBI:30616"/>
        <dbReference type="ChEBI" id="CHEBI:61977"/>
        <dbReference type="ChEBI" id="CHEBI:456216"/>
        <dbReference type="EC" id="2.7.11.11"/>
    </reaction>
</comment>
<comment type="activity regulation">
    <text>Allosterically activated by various compounds, including ATP. Activated by cAMP; the nucleotide acts as a dynamic and allosteric activator by coupling the two lobes of apo PKA, enhancing the enzyme dynamics synchronously and priming it for catalysis.</text>
</comment>
<comment type="subunit">
    <text evidence="1 2 9">A number of inactive tetrameric holoenzymes are produced by the combination of homo- or heterodimers of the different regulatory subunits associated with two catalytic subunits. cAMP causes the dissociation of the inactive holoenzyme into a dimer of regulatory subunits bound to four cAMP and two free monomeric catalytic subunits. Activates cAMP-sensitive PKAI and PKAII holoenzymes by interacting with regulatory subunit (R) of PKA, PRKAR1A/PKR1 and PRKAR2A/PKR2, respectively. Interacts with NFKB1, NFKB2 and NFKBIA in platelets; these interactions are disrupted by thrombin and collagen. Binds to ABL1 in spermatozoa and with CDC25B in oocytes (By similarity). Interacts with APOBEC3G and AICDA (By similarity). Interacts with RAB13; downstream effector of RAB13 involved in tight junction assembly. Found in a complex at least composed of MROH2B, PRKACA and TCP11 (By similarity). Interacts with MROH2B (By similarity). Interacts with HSF1 (By similarity). Interacts with TCP11 (By similarity). Interacts with TBC1D31; in the regulation of OFD1 (By similarity). Interacts in free form with SMO (via C-terminus); the interaction leads to sequestration of PRKACA at the membrane, preventing PRKACA-mediated phosphorylation of GLI transcription factors (By similarity).</text>
</comment>
<comment type="interaction">
    <interactant intactId="EBI-7251007">
        <id>P00517</id>
    </interactant>
    <interactant intactId="EBI-7250981">
        <id>P63251</id>
        <label>Kcnj3</label>
    </interactant>
    <organismsDiffer>true</organismsDiffer>
    <experiments>6</experiments>
</comment>
<comment type="subcellular location">
    <subcellularLocation>
        <location evidence="7">Cytoplasm</location>
    </subcellularLocation>
    <subcellularLocation>
        <location evidence="2">Cell membrane</location>
    </subcellularLocation>
    <subcellularLocation>
        <location evidence="2">Membrane</location>
        <topology evidence="2">Lipid-anchor</topology>
    </subcellularLocation>
    <subcellularLocation>
        <location evidence="7">Nucleus</location>
    </subcellularLocation>
    <subcellularLocation>
        <location evidence="1">Mitochondrion</location>
    </subcellularLocation>
    <text evidence="1 2">Translocates into the nucleus (monomeric catalytic subunit). The inactive holoenzyme is found in the cytoplasm. Distributed throughout the cytoplasm in meiotically incompetent oocytes. Associated to mitochondrion as meiotic competence is acquired. Aggregates around the germinal vesicles (GV) at the immature GV stage oocytes (By similarity). Colocalizes with HSF1 in nuclear stress bodies (nSBs) upon heat shock (By similarity). Recruited to the cell membrane through interaction with SMO (By similarity).</text>
</comment>
<comment type="tissue specificity">
    <text>Ubiquitously expressed in mammalian tissues.</text>
</comment>
<comment type="PTM">
    <text evidence="1 2">Autophosphorylated. Phosphorylation is enhanced by vitamin K(2). Phosphorylated on threonine and serine residues. Phosphorylation on Thr-198 is required for full activity (By similarity). Phosphorylated at Tyr-331 by activated receptor tyrosine kinases EGFR and PDGFR; this increases catalytic efficiency (By similarity).</text>
</comment>
<comment type="PTM">
    <text evidence="7 8 10 13">Asn-3 is deaminated to Asp in more than 25% of the proteins, giving rise to 2 major isoelectric variants, called CB and CA respectively (0.4 pH unit change). Deamidation proceeds via the so-called beta-aspartyl shift mechanism and yields either 'D-Asp-3' (major) or 'D-isoAsp-2' (minor), in addition to L-isomers. Deamidation occurs after the addition of myristate. The Asn-3 form reaches a significantly larger nuclear/cytoplasmic ratio than the 'Asp-2' form.</text>
</comment>
<comment type="PTM">
    <text evidence="1">When myristoylated, Ser-11 is autophosphorylated probably in conjunction with deamidation of Asn-3.</text>
</comment>
<comment type="similarity">
    <text evidence="14">Belongs to the protein kinase superfamily. AGC Ser/Thr protein kinase family. cAMP subfamily.</text>
</comment>
<keyword id="KW-0002">3D-structure</keyword>
<keyword id="KW-0067">ATP-binding</keyword>
<keyword id="KW-0114">cAMP</keyword>
<keyword id="KW-1003">Cell membrane</keyword>
<keyword id="KW-0963">Cytoplasm</keyword>
<keyword id="KW-0903">Direct protein sequencing</keyword>
<keyword id="KW-0418">Kinase</keyword>
<keyword id="KW-0449">Lipoprotein</keyword>
<keyword id="KW-0472">Membrane</keyword>
<keyword id="KW-0496">Mitochondrion</keyword>
<keyword id="KW-0519">Myristate</keyword>
<keyword id="KW-0547">Nucleotide-binding</keyword>
<keyword id="KW-0539">Nucleus</keyword>
<keyword id="KW-0597">Phosphoprotein</keyword>
<keyword id="KW-1185">Reference proteome</keyword>
<keyword id="KW-0723">Serine/threonine-protein kinase</keyword>
<keyword id="KW-0808">Transferase</keyword>
<name>KAPCA_BOVIN</name>
<proteinExistence type="evidence at protein level"/>
<gene>
    <name type="primary">PRKACA</name>
</gene>
<feature type="initiator methionine" description="Removed" evidence="10 12 13">
    <location>
        <position position="1"/>
    </location>
</feature>
<feature type="chain" id="PRO_0000086049" description="cAMP-dependent protein kinase catalytic subunit alpha">
    <location>
        <begin position="2"/>
        <end position="351"/>
    </location>
</feature>
<feature type="domain" description="Protein kinase" evidence="4">
    <location>
        <begin position="44"/>
        <end position="298"/>
    </location>
</feature>
<feature type="domain" description="AGC-kinase C-terminal" evidence="5">
    <location>
        <begin position="299"/>
        <end position="351"/>
    </location>
</feature>
<feature type="active site" description="Proton acceptor" evidence="4 6 11">
    <location>
        <position position="167"/>
    </location>
</feature>
<feature type="binding site">
    <location>
        <begin position="50"/>
        <end position="58"/>
    </location>
    <ligand>
        <name>ATP</name>
        <dbReference type="ChEBI" id="CHEBI:30616"/>
    </ligand>
</feature>
<feature type="binding site">
    <location>
        <position position="73"/>
    </location>
    <ligand>
        <name>ATP</name>
        <dbReference type="ChEBI" id="CHEBI:30616"/>
    </ligand>
</feature>
<feature type="binding site" evidence="4">
    <location>
        <begin position="122"/>
        <end position="128"/>
    </location>
    <ligand>
        <name>ATP</name>
        <dbReference type="ChEBI" id="CHEBI:30616"/>
    </ligand>
</feature>
<feature type="binding site" evidence="4">
    <location>
        <begin position="169"/>
        <end position="172"/>
    </location>
    <ligand>
        <name>ATP</name>
        <dbReference type="ChEBI" id="CHEBI:30616"/>
    </ligand>
</feature>
<feature type="modified residue" description="Deamidated asparagine; partial" evidence="7 8 13">
    <location>
        <position position="3"/>
    </location>
</feature>
<feature type="modified residue" description="Phosphoserine; by autocatalysis" evidence="1">
    <location>
        <position position="11"/>
    </location>
</feature>
<feature type="modified residue" description="Phosphothreonine" evidence="2">
    <location>
        <position position="49"/>
    </location>
</feature>
<feature type="modified residue" description="Phosphoserine" evidence="1">
    <location>
        <position position="140"/>
    </location>
</feature>
<feature type="modified residue" description="Phosphothreonine" evidence="2">
    <location>
        <position position="196"/>
    </location>
</feature>
<feature type="modified residue" description="Phosphothreonine; by PDPK1" evidence="10">
    <location>
        <position position="198"/>
    </location>
</feature>
<feature type="modified residue" description="Phosphotyrosine" evidence="1">
    <location>
        <position position="331"/>
    </location>
</feature>
<feature type="modified residue" description="Phosphoserine" evidence="10">
    <location>
        <position position="339"/>
    </location>
</feature>
<feature type="lipid moiety-binding region" description="N-myristoyl glycine" evidence="10">
    <location>
        <position position="2"/>
    </location>
</feature>
<feature type="mutagenesis site" description="No myristoylation." evidence="13">
    <original>N</original>
    <variation>D</variation>
    <location>
        <position position="3"/>
    </location>
</feature>
<feature type="sequence conflict" description="In Ref. 4; AA sequence." evidence="14" ref="4">
    <original>T</original>
    <variation>N</variation>
    <location>
        <position position="202"/>
    </location>
</feature>
<feature type="sequence conflict" description="In Ref. 4; AA sequence." evidence="14" ref="4">
    <original>E</original>
    <variation>Q</variation>
    <location>
        <position position="204"/>
    </location>
</feature>
<feature type="sequence conflict" description="In Ref. 4; AA sequence." evidence="14" ref="4">
    <original>L</original>
    <variation>S</variation>
    <location>
        <position position="206"/>
    </location>
</feature>
<feature type="sequence conflict" description="In Ref. 2; AA sequence and 3; AA sequence." evidence="14" ref="2 3">
    <original>N</original>
    <variation>D</variation>
    <location>
        <position position="287"/>
    </location>
</feature>
<feature type="turn" evidence="17">
    <location>
        <begin position="11"/>
        <end position="13"/>
    </location>
</feature>
<feature type="helix" evidence="22">
    <location>
        <begin position="18"/>
        <end position="32"/>
    </location>
</feature>
<feature type="helix" evidence="22">
    <location>
        <begin position="41"/>
        <end position="43"/>
    </location>
</feature>
<feature type="strand" evidence="22">
    <location>
        <begin position="44"/>
        <end position="53"/>
    </location>
</feature>
<feature type="strand" evidence="22">
    <location>
        <begin position="56"/>
        <end position="63"/>
    </location>
</feature>
<feature type="turn" evidence="22">
    <location>
        <begin position="64"/>
        <end position="66"/>
    </location>
</feature>
<feature type="strand" evidence="22">
    <location>
        <begin position="69"/>
        <end position="76"/>
    </location>
</feature>
<feature type="helix" evidence="22">
    <location>
        <begin position="77"/>
        <end position="82"/>
    </location>
</feature>
<feature type="helix" evidence="22">
    <location>
        <begin position="86"/>
        <end position="98"/>
    </location>
</feature>
<feature type="strand" evidence="22">
    <location>
        <begin position="107"/>
        <end position="112"/>
    </location>
</feature>
<feature type="strand" evidence="22">
    <location>
        <begin position="114"/>
        <end position="122"/>
    </location>
</feature>
<feature type="helix" evidence="22">
    <location>
        <begin position="129"/>
        <end position="136"/>
    </location>
</feature>
<feature type="helix" evidence="22">
    <location>
        <begin position="141"/>
        <end position="160"/>
    </location>
</feature>
<feature type="helix" evidence="22">
    <location>
        <begin position="170"/>
        <end position="172"/>
    </location>
</feature>
<feature type="strand" evidence="22">
    <location>
        <begin position="173"/>
        <end position="175"/>
    </location>
</feature>
<feature type="strand" evidence="23">
    <location>
        <begin position="177"/>
        <end position="179"/>
    </location>
</feature>
<feature type="strand" evidence="22">
    <location>
        <begin position="181"/>
        <end position="183"/>
    </location>
</feature>
<feature type="helix" evidence="18">
    <location>
        <begin position="186"/>
        <end position="188"/>
    </location>
</feature>
<feature type="strand" evidence="19">
    <location>
        <begin position="199"/>
        <end position="201"/>
    </location>
</feature>
<feature type="helix" evidence="22">
    <location>
        <begin position="203"/>
        <end position="205"/>
    </location>
</feature>
<feature type="helix" evidence="22">
    <location>
        <begin position="208"/>
        <end position="211"/>
    </location>
</feature>
<feature type="helix" evidence="22">
    <location>
        <begin position="219"/>
        <end position="234"/>
    </location>
</feature>
<feature type="helix" evidence="22">
    <location>
        <begin position="244"/>
        <end position="253"/>
    </location>
</feature>
<feature type="strand" evidence="16">
    <location>
        <begin position="260"/>
        <end position="262"/>
    </location>
</feature>
<feature type="helix" evidence="22">
    <location>
        <begin position="264"/>
        <end position="273"/>
    </location>
</feature>
<feature type="turn" evidence="22">
    <location>
        <begin position="278"/>
        <end position="280"/>
    </location>
</feature>
<feature type="turn" evidence="20">
    <location>
        <begin position="282"/>
        <end position="284"/>
    </location>
</feature>
<feature type="turn" evidence="22">
    <location>
        <begin position="286"/>
        <end position="289"/>
    </location>
</feature>
<feature type="helix" evidence="22">
    <location>
        <begin position="290"/>
        <end position="293"/>
    </location>
</feature>
<feature type="helix" evidence="22">
    <location>
        <begin position="296"/>
        <end position="298"/>
    </location>
</feature>
<feature type="helix" evidence="22">
    <location>
        <begin position="303"/>
        <end position="307"/>
    </location>
</feature>
<feature type="strand" evidence="21">
    <location>
        <begin position="322"/>
        <end position="325"/>
    </location>
</feature>
<feature type="strand" evidence="15">
    <location>
        <begin position="326"/>
        <end position="328"/>
    </location>
</feature>
<feature type="turn" evidence="22">
    <location>
        <begin position="345"/>
        <end position="350"/>
    </location>
</feature>